<proteinExistence type="evidence at protein level"/>
<gene>
    <name type="primary">mazF9</name>
    <name evidence="6" type="synonym">mazF-mt1</name>
    <name type="ordered locus">Rv2801c</name>
</gene>
<dbReference type="EC" id="3.1.-.-"/>
<dbReference type="EMBL" id="AL123456">
    <property type="protein sequence ID" value="CCP45600.1"/>
    <property type="molecule type" value="Genomic_DNA"/>
</dbReference>
<dbReference type="PIR" id="D70689">
    <property type="entry name" value="D70689"/>
</dbReference>
<dbReference type="RefSeq" id="NP_217317.1">
    <property type="nucleotide sequence ID" value="NC_000962.3"/>
</dbReference>
<dbReference type="RefSeq" id="WP_003414166.1">
    <property type="nucleotide sequence ID" value="NZ_NVQJ01000020.1"/>
</dbReference>
<dbReference type="PDB" id="5HJZ">
    <property type="method" value="X-ray"/>
    <property type="resolution" value="1.98 A"/>
    <property type="chains" value="A/B=1-118"/>
</dbReference>
<dbReference type="PDB" id="6KYS">
    <property type="method" value="X-ray"/>
    <property type="resolution" value="2.20 A"/>
    <property type="chains" value="A/B=2-118"/>
</dbReference>
<dbReference type="PDB" id="6KYT">
    <property type="method" value="X-ray"/>
    <property type="resolution" value="2.00 A"/>
    <property type="chains" value="A/B/D/E/G/H/J/K=1-118"/>
</dbReference>
<dbReference type="PDB" id="6L29">
    <property type="method" value="X-ray"/>
    <property type="resolution" value="2.30 A"/>
    <property type="chains" value="A/B=2-118"/>
</dbReference>
<dbReference type="PDB" id="6L2A">
    <property type="method" value="X-ray"/>
    <property type="resolution" value="1.90 A"/>
    <property type="chains" value="A=2-118"/>
</dbReference>
<dbReference type="PDB" id="7DU5">
    <property type="method" value="X-ray"/>
    <property type="resolution" value="2.65 A"/>
    <property type="chains" value="A/B=2-118"/>
</dbReference>
<dbReference type="PDBsum" id="5HJZ"/>
<dbReference type="PDBsum" id="6KYS"/>
<dbReference type="PDBsum" id="6KYT"/>
<dbReference type="PDBsum" id="6L29"/>
<dbReference type="PDBsum" id="6L2A"/>
<dbReference type="PDBsum" id="7DU5"/>
<dbReference type="SMR" id="P71650"/>
<dbReference type="FunCoup" id="P71650">
    <property type="interactions" value="1"/>
</dbReference>
<dbReference type="STRING" id="83332.Rv2801c"/>
<dbReference type="PaxDb" id="83332-Rv2801c"/>
<dbReference type="DNASU" id="888921"/>
<dbReference type="GeneID" id="888921"/>
<dbReference type="KEGG" id="mtu:Rv2801c"/>
<dbReference type="KEGG" id="mtv:RVBD_2801c"/>
<dbReference type="TubercuList" id="Rv2801c"/>
<dbReference type="eggNOG" id="COG2337">
    <property type="taxonomic scope" value="Bacteria"/>
</dbReference>
<dbReference type="InParanoid" id="P71650"/>
<dbReference type="OrthoDB" id="9808744at2"/>
<dbReference type="PhylomeDB" id="P71650"/>
<dbReference type="Proteomes" id="UP000001584">
    <property type="component" value="Chromosome"/>
</dbReference>
<dbReference type="GO" id="GO:0003677">
    <property type="term" value="F:DNA binding"/>
    <property type="evidence" value="ECO:0007669"/>
    <property type="project" value="InterPro"/>
</dbReference>
<dbReference type="GO" id="GO:0004521">
    <property type="term" value="F:RNA endonuclease activity"/>
    <property type="evidence" value="ECO:0000314"/>
    <property type="project" value="MTBBASE"/>
</dbReference>
<dbReference type="GO" id="GO:0006402">
    <property type="term" value="P:mRNA catabolic process"/>
    <property type="evidence" value="ECO:0000314"/>
    <property type="project" value="MTBBASE"/>
</dbReference>
<dbReference type="GO" id="GO:0045926">
    <property type="term" value="P:negative regulation of growth"/>
    <property type="evidence" value="ECO:0000314"/>
    <property type="project" value="MTBBASE"/>
</dbReference>
<dbReference type="GO" id="GO:0016075">
    <property type="term" value="P:rRNA catabolic process"/>
    <property type="evidence" value="ECO:0000318"/>
    <property type="project" value="GO_Central"/>
</dbReference>
<dbReference type="GO" id="GO:0044003">
    <property type="term" value="P:symbiont-mediated perturbation of host process"/>
    <property type="evidence" value="ECO:0000315"/>
    <property type="project" value="MTBBASE"/>
</dbReference>
<dbReference type="Gene3D" id="2.30.30.110">
    <property type="match status" value="1"/>
</dbReference>
<dbReference type="InterPro" id="IPR003477">
    <property type="entry name" value="PemK-like"/>
</dbReference>
<dbReference type="InterPro" id="IPR011067">
    <property type="entry name" value="Plasmid_toxin/cell-grow_inhib"/>
</dbReference>
<dbReference type="PANTHER" id="PTHR33988">
    <property type="entry name" value="ENDORIBONUCLEASE MAZF-RELATED"/>
    <property type="match status" value="1"/>
</dbReference>
<dbReference type="PANTHER" id="PTHR33988:SF1">
    <property type="entry name" value="ENDORIBONUCLEASE MAZF7-RELATED"/>
    <property type="match status" value="1"/>
</dbReference>
<dbReference type="Pfam" id="PF02452">
    <property type="entry name" value="PemK_toxin"/>
    <property type="match status" value="1"/>
</dbReference>
<dbReference type="PIRSF" id="PIRSF033490">
    <property type="entry name" value="MazF"/>
    <property type="match status" value="1"/>
</dbReference>
<dbReference type="SUPFAM" id="SSF50118">
    <property type="entry name" value="Cell growth inhibitor/plasmid maintenance toxic component"/>
    <property type="match status" value="1"/>
</dbReference>
<organism>
    <name type="scientific">Mycobacterium tuberculosis (strain ATCC 25618 / H37Rv)</name>
    <dbReference type="NCBI Taxonomy" id="83332"/>
    <lineage>
        <taxon>Bacteria</taxon>
        <taxon>Bacillati</taxon>
        <taxon>Actinomycetota</taxon>
        <taxon>Actinomycetes</taxon>
        <taxon>Mycobacteriales</taxon>
        <taxon>Mycobacteriaceae</taxon>
        <taxon>Mycobacterium</taxon>
        <taxon>Mycobacterium tuberculosis complex</taxon>
    </lineage>
</organism>
<accession>P71650</accession>
<accession>L0TAP2</accession>
<protein>
    <recommendedName>
        <fullName evidence="7">Endoribonuclease MazF9</fullName>
        <ecNumber>3.1.-.-</ecNumber>
    </recommendedName>
    <alternativeName>
        <fullName evidence="6">Toxin MazF9</fullName>
    </alternativeName>
    <alternativeName>
        <fullName evidence="6">mRNA interferase MazF-mt1</fullName>
    </alternativeName>
</protein>
<name>MAZF9_MYCTU</name>
<feature type="chain" id="PRO_0000406309" description="Endoribonuclease MazF9">
    <location>
        <begin position="1"/>
        <end position="118"/>
    </location>
</feature>
<feature type="strand" evidence="9">
    <location>
        <begin position="6"/>
        <end position="10"/>
    </location>
</feature>
<feature type="strand" evidence="9">
    <location>
        <begin position="24"/>
        <end position="28"/>
    </location>
</feature>
<feature type="helix" evidence="9">
    <location>
        <begin position="32"/>
        <end position="41"/>
    </location>
</feature>
<feature type="strand" evidence="9">
    <location>
        <begin position="45"/>
        <end position="53"/>
    </location>
</feature>
<feature type="strand" evidence="9">
    <location>
        <begin position="62"/>
        <end position="65"/>
    </location>
</feature>
<feature type="helix" evidence="9">
    <location>
        <begin position="67"/>
        <end position="70"/>
    </location>
</feature>
<feature type="strand" evidence="8">
    <location>
        <begin position="71"/>
        <end position="74"/>
    </location>
</feature>
<feature type="strand" evidence="9">
    <location>
        <begin position="76"/>
        <end position="79"/>
    </location>
</feature>
<feature type="helix" evidence="9">
    <location>
        <begin position="80"/>
        <end position="82"/>
    </location>
</feature>
<feature type="strand" evidence="9">
    <location>
        <begin position="84"/>
        <end position="87"/>
    </location>
</feature>
<feature type="helix" evidence="9">
    <location>
        <begin position="88"/>
        <end position="90"/>
    </location>
</feature>
<feature type="strand" evidence="9">
    <location>
        <begin position="91"/>
        <end position="97"/>
    </location>
</feature>
<feature type="helix" evidence="9">
    <location>
        <begin position="100"/>
        <end position="113"/>
    </location>
</feature>
<comment type="function">
    <text evidence="1 2 3 4 5">Toxic component of a type II toxin-antitoxin (TA) system. Upon expression in E.coli and M.smegmatis inhibits cell growth and colony formation. Its toxic effect is neutralized by coexpression with cognate antitoxin MazE9. Acts as an mRNA interferase, specifically cleaving between U and C in UAC sequences. May cleave its cognate antitoxin's gene (PubMed:25608501). In E.coli expression with non-cognate antitoxins VapB27 and VapB40 partially neutralizes the toxin.</text>
</comment>
<comment type="subunit">
    <text evidence="4 5">Forms a complex with cognate antitoxin MazE9.</text>
</comment>
<comment type="induction">
    <text evidence="5">Mildy induced (5 to 9-fold) by oxidative and nitrosative stress, starvation, growth in the presence of isoniazid or gentamycin, strongly induced (24-fold) when grown in a non-replicating state.</text>
</comment>
<comment type="disruption phenotype">
    <text evidence="5">Individual deletion of mazF3, mazF6 and mazF9 have little to no phenotype, but a triple mutant shows increased sensitivity to oxidative and antibiotic stress and starvation, decreased formation of persisters cells, and a decreased bacterial load and pathogenic damage in infected guinea pigs.</text>
</comment>
<comment type="similarity">
    <text evidence="7">Belongs to the PemK/MazF family.</text>
</comment>
<evidence type="ECO:0000269" key="1">
    <source>
    </source>
</evidence>
<evidence type="ECO:0000269" key="2">
    <source>
    </source>
</evidence>
<evidence type="ECO:0000269" key="3">
    <source>
    </source>
</evidence>
<evidence type="ECO:0000269" key="4">
    <source>
    </source>
</evidence>
<evidence type="ECO:0000269" key="5">
    <source>
    </source>
</evidence>
<evidence type="ECO:0000303" key="6">
    <source>
    </source>
</evidence>
<evidence type="ECO:0000305" key="7"/>
<evidence type="ECO:0007829" key="8">
    <source>
        <dbReference type="PDB" id="6KYT"/>
    </source>
</evidence>
<evidence type="ECO:0007829" key="9">
    <source>
        <dbReference type="PDB" id="6L2A"/>
    </source>
</evidence>
<reference key="1">
    <citation type="journal article" date="1998" name="Nature">
        <title>Deciphering the biology of Mycobacterium tuberculosis from the complete genome sequence.</title>
        <authorList>
            <person name="Cole S.T."/>
            <person name="Brosch R."/>
            <person name="Parkhill J."/>
            <person name="Garnier T."/>
            <person name="Churcher C.M."/>
            <person name="Harris D.E."/>
            <person name="Gordon S.V."/>
            <person name="Eiglmeier K."/>
            <person name="Gas S."/>
            <person name="Barry C.E. III"/>
            <person name="Tekaia F."/>
            <person name="Badcock K."/>
            <person name="Basham D."/>
            <person name="Brown D."/>
            <person name="Chillingworth T."/>
            <person name="Connor R."/>
            <person name="Davies R.M."/>
            <person name="Devlin K."/>
            <person name="Feltwell T."/>
            <person name="Gentles S."/>
            <person name="Hamlin N."/>
            <person name="Holroyd S."/>
            <person name="Hornsby T."/>
            <person name="Jagels K."/>
            <person name="Krogh A."/>
            <person name="McLean J."/>
            <person name="Moule S."/>
            <person name="Murphy L.D."/>
            <person name="Oliver S."/>
            <person name="Osborne J."/>
            <person name="Quail M.A."/>
            <person name="Rajandream M.A."/>
            <person name="Rogers J."/>
            <person name="Rutter S."/>
            <person name="Seeger K."/>
            <person name="Skelton S."/>
            <person name="Squares S."/>
            <person name="Squares R."/>
            <person name="Sulston J.E."/>
            <person name="Taylor K."/>
            <person name="Whitehead S."/>
            <person name="Barrell B.G."/>
        </authorList>
    </citation>
    <scope>NUCLEOTIDE SEQUENCE [LARGE SCALE GENOMIC DNA]</scope>
    <source>
        <strain>ATCC 25618 / H37Rv</strain>
    </source>
</reference>
<reference key="2">
    <citation type="journal article" date="2006" name="J. Biol. Chem.">
        <title>Characterization of mRNA interferases from Mycobacterium tuberculosis.</title>
        <authorList>
            <person name="Zhu L."/>
            <person name="Zhang Y."/>
            <person name="Teh J.S."/>
            <person name="Zhang J."/>
            <person name="Connell N."/>
            <person name="Rubin H."/>
            <person name="Inouye M."/>
        </authorList>
    </citation>
    <scope>FUNCTION AS AN MRNA INTERFERASE</scope>
    <scope>SUBSTRATE SPECIFICITY</scope>
    <scope>EXPRESSION IN E.COLI</scope>
    <source>
        <strain>ATCC 25618 / H37Rv</strain>
    </source>
</reference>
<reference key="3">
    <citation type="journal article" date="2009" name="FEMS Microbiol. Lett.">
        <title>Killing activity and rescue function of genome-wide toxin-antitoxin loci of Mycobacterium tuberculosis.</title>
        <authorList>
            <person name="Gupta A."/>
        </authorList>
    </citation>
    <scope>EXPRESSION IN E.COLI</scope>
    <scope>FUNCTION AS A TOXIN</scope>
    <source>
        <strain>ATCC 25618 / H37Rv</strain>
    </source>
</reference>
<reference key="4">
    <citation type="journal article" date="2009" name="PLoS Genet.">
        <title>Comprehensive functional analysis of Mycobacterium tuberculosis toxin-antitoxin systems: implications for pathogenesis, stress responses, and evolution.</title>
        <authorList>
            <person name="Ramage H.R."/>
            <person name="Connolly L.E."/>
            <person name="Cox J.S."/>
        </authorList>
    </citation>
    <scope>EXPRESSION IN M.SMEGMATIS</scope>
    <scope>FUNCTION AS A TOXIN</scope>
    <source>
        <strain>ATCC 35801 / TMC 107 / Erdman</strain>
    </source>
</reference>
<reference key="5">
    <citation type="journal article" date="2010" name="J. Biol. Chem.">
        <title>Noncognate Mycobacterium tuberculosis toxin-antitoxins can physically and functionally interact.</title>
        <authorList>
            <person name="Zhu L."/>
            <person name="Sharp J.D."/>
            <person name="Kobayashi H."/>
            <person name="Woychik N.A."/>
            <person name="Inouye M."/>
        </authorList>
    </citation>
    <scope>FUNCTION AS A TOXIN</scope>
    <scope>INTERACTION WITH ANTITOXINS MAZE9; VAPB27 AND VAPB40</scope>
    <source>
        <strain>ATCC 25618 / H37Rv</strain>
    </source>
</reference>
<reference key="6">
    <citation type="journal article" date="2011" name="Mol. Cell. Proteomics">
        <title>Proteogenomic analysis of Mycobacterium tuberculosis by high resolution mass spectrometry.</title>
        <authorList>
            <person name="Kelkar D.S."/>
            <person name="Kumar D."/>
            <person name="Kumar P."/>
            <person name="Balakrishnan L."/>
            <person name="Muthusamy B."/>
            <person name="Yadav A.K."/>
            <person name="Shrivastava P."/>
            <person name="Marimuthu A."/>
            <person name="Anand S."/>
            <person name="Sundaram H."/>
            <person name="Kingsbury R."/>
            <person name="Harsha H.C."/>
            <person name="Nair B."/>
            <person name="Prasad T.S."/>
            <person name="Chauhan D.S."/>
            <person name="Katoch K."/>
            <person name="Katoch V.M."/>
            <person name="Kumar P."/>
            <person name="Chaerkady R."/>
            <person name="Ramachandran S."/>
            <person name="Dash D."/>
            <person name="Pandey A."/>
        </authorList>
    </citation>
    <scope>IDENTIFICATION BY MASS SPECTROMETRY [LARGE SCALE ANALYSIS]</scope>
    <source>
        <strain>ATCC 25618 / H37Rv</strain>
    </source>
</reference>
<reference key="7">
    <citation type="journal article" date="2015" name="Nat. Commun.">
        <title>MazF ribonucleases promote Mycobacterium tuberculosis drug tolerance and virulence in guinea pigs.</title>
        <authorList>
            <person name="Tiwari P."/>
            <person name="Arora G."/>
            <person name="Singh M."/>
            <person name="Kidwai S."/>
            <person name="Narayan O.P."/>
            <person name="Singh R."/>
        </authorList>
    </citation>
    <scope>FUNCTION</scope>
    <scope>INTERACTION WITH MAZE9</scope>
    <scope>INDUCTION</scope>
    <scope>DISRUPTION PHENOTYPE</scope>
    <source>
        <strain>H37Rv</strain>
    </source>
</reference>
<sequence length="118" mass="12891">MMRRGEIWQVDLDPARGSEANNQRPAVVVSNDRANATATRLGRGVITVVPVTSNIAKVYPFQVLLSATTTGLQVDCKAQAEQIRSIATERLLRPIGRVSAAELAQLDEALKLHLDLWS</sequence>
<keyword id="KW-0002">3D-structure</keyword>
<keyword id="KW-0255">Endonuclease</keyword>
<keyword id="KW-0378">Hydrolase</keyword>
<keyword id="KW-0540">Nuclease</keyword>
<keyword id="KW-1185">Reference proteome</keyword>
<keyword id="KW-1277">Toxin-antitoxin system</keyword>